<accession>B8JFY8</accession>
<reference key="1">
    <citation type="submission" date="2009-01" db="EMBL/GenBank/DDBJ databases">
        <title>Complete sequence of Anaeromyxobacter dehalogenans 2CP-1.</title>
        <authorList>
            <person name="Lucas S."/>
            <person name="Copeland A."/>
            <person name="Lapidus A."/>
            <person name="Glavina del Rio T."/>
            <person name="Dalin E."/>
            <person name="Tice H."/>
            <person name="Bruce D."/>
            <person name="Goodwin L."/>
            <person name="Pitluck S."/>
            <person name="Saunders E."/>
            <person name="Brettin T."/>
            <person name="Detter J.C."/>
            <person name="Han C."/>
            <person name="Larimer F."/>
            <person name="Land M."/>
            <person name="Hauser L."/>
            <person name="Kyrpides N."/>
            <person name="Ovchinnikova G."/>
            <person name="Beliaev A.S."/>
            <person name="Richardson P."/>
        </authorList>
    </citation>
    <scope>NUCLEOTIDE SEQUENCE [LARGE SCALE GENOMIC DNA]</scope>
    <source>
        <strain>2CP-1 / ATCC BAA-258</strain>
    </source>
</reference>
<sequence>MTTHNRPARVAEEFRHELSAILARGLKDPRITGFVTVTGSKMSPDLKEATVYVSIHGDERVRKDTFAGLQAAAGFLQREVSRALRLRNTPHLRFVYDESVARGDRIERLLREARTQGQAAPAPDVEPAPGAAPDDEAEE</sequence>
<name>RBFA_ANAD2</name>
<gene>
    <name evidence="1" type="primary">rbfA</name>
    <name type="ordered locus">A2cp1_1232</name>
</gene>
<feature type="chain" id="PRO_1000193223" description="Ribosome-binding factor A">
    <location>
        <begin position="1"/>
        <end position="139"/>
    </location>
</feature>
<feature type="region of interest" description="Disordered" evidence="2">
    <location>
        <begin position="112"/>
        <end position="139"/>
    </location>
</feature>
<feature type="compositionally biased region" description="Low complexity" evidence="2">
    <location>
        <begin position="119"/>
        <end position="132"/>
    </location>
</feature>
<proteinExistence type="inferred from homology"/>
<comment type="function">
    <text evidence="1">One of several proteins that assist in the late maturation steps of the functional core of the 30S ribosomal subunit. Associates with free 30S ribosomal subunits (but not with 30S subunits that are part of 70S ribosomes or polysomes). Required for efficient processing of 16S rRNA. May interact with the 5'-terminal helix region of 16S rRNA.</text>
</comment>
<comment type="subunit">
    <text evidence="1">Monomer. Binds 30S ribosomal subunits, but not 50S ribosomal subunits or 70S ribosomes.</text>
</comment>
<comment type="subcellular location">
    <subcellularLocation>
        <location evidence="1">Cytoplasm</location>
    </subcellularLocation>
</comment>
<comment type="similarity">
    <text evidence="1">Belongs to the RbfA family.</text>
</comment>
<dbReference type="EMBL" id="CP001359">
    <property type="protein sequence ID" value="ACL64576.1"/>
    <property type="molecule type" value="Genomic_DNA"/>
</dbReference>
<dbReference type="RefSeq" id="WP_012632558.1">
    <property type="nucleotide sequence ID" value="NC_011891.1"/>
</dbReference>
<dbReference type="SMR" id="B8JFY8"/>
<dbReference type="KEGG" id="acp:A2cp1_1232"/>
<dbReference type="HOGENOM" id="CLU_089475_5_0_7"/>
<dbReference type="Proteomes" id="UP000007089">
    <property type="component" value="Chromosome"/>
</dbReference>
<dbReference type="GO" id="GO:0005829">
    <property type="term" value="C:cytosol"/>
    <property type="evidence" value="ECO:0007669"/>
    <property type="project" value="TreeGrafter"/>
</dbReference>
<dbReference type="GO" id="GO:0043024">
    <property type="term" value="F:ribosomal small subunit binding"/>
    <property type="evidence" value="ECO:0007669"/>
    <property type="project" value="TreeGrafter"/>
</dbReference>
<dbReference type="GO" id="GO:0030490">
    <property type="term" value="P:maturation of SSU-rRNA"/>
    <property type="evidence" value="ECO:0007669"/>
    <property type="project" value="UniProtKB-UniRule"/>
</dbReference>
<dbReference type="Gene3D" id="3.30.300.20">
    <property type="match status" value="1"/>
</dbReference>
<dbReference type="HAMAP" id="MF_00003">
    <property type="entry name" value="RbfA"/>
    <property type="match status" value="1"/>
</dbReference>
<dbReference type="InterPro" id="IPR015946">
    <property type="entry name" value="KH_dom-like_a/b"/>
</dbReference>
<dbReference type="InterPro" id="IPR000238">
    <property type="entry name" value="RbfA"/>
</dbReference>
<dbReference type="InterPro" id="IPR023799">
    <property type="entry name" value="RbfA_dom_sf"/>
</dbReference>
<dbReference type="InterPro" id="IPR020053">
    <property type="entry name" value="Ribosome-bd_factorA_CS"/>
</dbReference>
<dbReference type="NCBIfam" id="TIGR00082">
    <property type="entry name" value="rbfA"/>
    <property type="match status" value="1"/>
</dbReference>
<dbReference type="PANTHER" id="PTHR33515">
    <property type="entry name" value="RIBOSOME-BINDING FACTOR A, CHLOROPLASTIC-RELATED"/>
    <property type="match status" value="1"/>
</dbReference>
<dbReference type="PANTHER" id="PTHR33515:SF1">
    <property type="entry name" value="RIBOSOME-BINDING FACTOR A, CHLOROPLASTIC-RELATED"/>
    <property type="match status" value="1"/>
</dbReference>
<dbReference type="Pfam" id="PF02033">
    <property type="entry name" value="RBFA"/>
    <property type="match status" value="1"/>
</dbReference>
<dbReference type="SUPFAM" id="SSF89919">
    <property type="entry name" value="Ribosome-binding factor A, RbfA"/>
    <property type="match status" value="1"/>
</dbReference>
<dbReference type="PROSITE" id="PS01319">
    <property type="entry name" value="RBFA"/>
    <property type="match status" value="1"/>
</dbReference>
<organism>
    <name type="scientific">Anaeromyxobacter dehalogenans (strain 2CP-1 / ATCC BAA-258)</name>
    <dbReference type="NCBI Taxonomy" id="455488"/>
    <lineage>
        <taxon>Bacteria</taxon>
        <taxon>Pseudomonadati</taxon>
        <taxon>Myxococcota</taxon>
        <taxon>Myxococcia</taxon>
        <taxon>Myxococcales</taxon>
        <taxon>Cystobacterineae</taxon>
        <taxon>Anaeromyxobacteraceae</taxon>
        <taxon>Anaeromyxobacter</taxon>
    </lineage>
</organism>
<keyword id="KW-0963">Cytoplasm</keyword>
<keyword id="KW-0690">Ribosome biogenesis</keyword>
<evidence type="ECO:0000255" key="1">
    <source>
        <dbReference type="HAMAP-Rule" id="MF_00003"/>
    </source>
</evidence>
<evidence type="ECO:0000256" key="2">
    <source>
        <dbReference type="SAM" id="MobiDB-lite"/>
    </source>
</evidence>
<protein>
    <recommendedName>
        <fullName evidence="1">Ribosome-binding factor A</fullName>
    </recommendedName>
</protein>